<comment type="function">
    <text>Shows neither neuropeptide activity nor antibiotic activity.</text>
</comment>
<comment type="subcellular location">
    <subcellularLocation>
        <location>Secreted</location>
    </subcellularLocation>
</comment>
<comment type="tissue specificity">
    <text>Expressed by the skin dorsal glands.</text>
</comment>
<comment type="mass spectrometry" mass="626.0" method="FAB" evidence="1"/>
<accession>P82071</accession>
<proteinExistence type="evidence at protein level"/>
<evidence type="ECO:0000269" key="1">
    <source ref="1"/>
</evidence>
<feature type="peptide" id="PRO_0000043833" description="Rubellidin-2.1">
    <location>
        <begin position="1"/>
        <end position="5"/>
    </location>
</feature>
<name>RBE21_LITRU</name>
<sequence length="5" mass="626">IEFFA</sequence>
<protein>
    <recommendedName>
        <fullName>Rubellidin-2.1</fullName>
    </recommendedName>
</protein>
<organism>
    <name type="scientific">Litoria rubella</name>
    <name type="common">Desert tree frog</name>
    <name type="synonym">Hyla rubella</name>
    <dbReference type="NCBI Taxonomy" id="104895"/>
    <lineage>
        <taxon>Eukaryota</taxon>
        <taxon>Metazoa</taxon>
        <taxon>Chordata</taxon>
        <taxon>Craniata</taxon>
        <taxon>Vertebrata</taxon>
        <taxon>Euteleostomi</taxon>
        <taxon>Amphibia</taxon>
        <taxon>Batrachia</taxon>
        <taxon>Anura</taxon>
        <taxon>Neobatrachia</taxon>
        <taxon>Hyloidea</taxon>
        <taxon>Hylidae</taxon>
        <taxon>Pelodryadinae</taxon>
        <taxon>Litoria</taxon>
    </lineage>
</organism>
<reference key="1">
    <citation type="journal article" date="1996" name="Aust. J. Chem.">
        <title>The structure of new peptides from the Australin red tree frog 'Litoria rubella'. The skin peptide profile as a probe for the study of evolutionary trends of amphibians.</title>
        <authorList>
            <person name="Steinborner S.T."/>
            <person name="Wabnitz P.A."/>
            <person name="Waugh R.J."/>
            <person name="Bowie J.H."/>
            <person name="Gao C."/>
            <person name="Tyler M.J."/>
            <person name="Wallace J.C."/>
        </authorList>
    </citation>
    <scope>PROTEIN SEQUENCE</scope>
    <scope>MASS SPECTROMETRY</scope>
    <source>
        <tissue>Skin secretion</tissue>
    </source>
</reference>
<dbReference type="GO" id="GO:0005576">
    <property type="term" value="C:extracellular region"/>
    <property type="evidence" value="ECO:0007669"/>
    <property type="project" value="UniProtKB-SubCell"/>
</dbReference>
<dbReference type="GO" id="GO:0006952">
    <property type="term" value="P:defense response"/>
    <property type="evidence" value="ECO:0007669"/>
    <property type="project" value="UniProtKB-KW"/>
</dbReference>
<keyword id="KW-0878">Amphibian defense peptide</keyword>
<keyword id="KW-0903">Direct protein sequencing</keyword>
<keyword id="KW-0964">Secreted</keyword>